<dbReference type="EMBL" id="S77900">
    <property type="protein sequence ID" value="AAB34127.1"/>
    <property type="molecule type" value="mRNA"/>
</dbReference>
<dbReference type="RefSeq" id="NP_001094355.1">
    <property type="nucleotide sequence ID" value="NM_001100885.1"/>
</dbReference>
<dbReference type="BioGRID" id="255320">
    <property type="interactions" value="3"/>
</dbReference>
<dbReference type="FunCoup" id="Q64122">
    <property type="interactions" value="1172"/>
</dbReference>
<dbReference type="IntAct" id="Q64122">
    <property type="interactions" value="1"/>
</dbReference>
<dbReference type="MINT" id="Q64122"/>
<dbReference type="STRING" id="10116.ENSRNOP00000027445"/>
<dbReference type="iPTMnet" id="Q64122"/>
<dbReference type="PhosphoSitePlus" id="Q64122"/>
<dbReference type="jPOST" id="Q64122"/>
<dbReference type="PaxDb" id="10116-ENSRNOP00000027445"/>
<dbReference type="PeptideAtlas" id="Q64122"/>
<dbReference type="GeneID" id="296313"/>
<dbReference type="KEGG" id="rno:296313"/>
<dbReference type="UCSC" id="RGD:1311235">
    <property type="organism name" value="rat"/>
</dbReference>
<dbReference type="AGR" id="RGD:1311235"/>
<dbReference type="CTD" id="10398"/>
<dbReference type="RGD" id="1311235">
    <property type="gene designation" value="Myl9"/>
</dbReference>
<dbReference type="eggNOG" id="KOG0031">
    <property type="taxonomic scope" value="Eukaryota"/>
</dbReference>
<dbReference type="InParanoid" id="Q64122"/>
<dbReference type="OrthoDB" id="429467at2759"/>
<dbReference type="Reactome" id="R-RNO-445355">
    <property type="pathway name" value="Smooth Muscle Contraction"/>
</dbReference>
<dbReference type="Reactome" id="R-RNO-5627123">
    <property type="pathway name" value="RHO GTPases activate PAKs"/>
</dbReference>
<dbReference type="ChiTaRS" id="Myl9">
    <property type="organism name" value="rat"/>
</dbReference>
<dbReference type="PRO" id="PR:Q64122"/>
<dbReference type="Proteomes" id="UP000002494">
    <property type="component" value="Unplaced"/>
</dbReference>
<dbReference type="GO" id="GO:0005938">
    <property type="term" value="C:cell cortex"/>
    <property type="evidence" value="ECO:0007669"/>
    <property type="project" value="UniProtKB-SubCell"/>
</dbReference>
<dbReference type="GO" id="GO:0005737">
    <property type="term" value="C:cytoplasm"/>
    <property type="evidence" value="ECO:0000318"/>
    <property type="project" value="GO_Central"/>
</dbReference>
<dbReference type="GO" id="GO:0030016">
    <property type="term" value="C:myofibril"/>
    <property type="evidence" value="ECO:0000318"/>
    <property type="project" value="GO_Central"/>
</dbReference>
<dbReference type="GO" id="GO:0016460">
    <property type="term" value="C:myosin II complex"/>
    <property type="evidence" value="ECO:0000266"/>
    <property type="project" value="RGD"/>
</dbReference>
<dbReference type="GO" id="GO:0001725">
    <property type="term" value="C:stress fiber"/>
    <property type="evidence" value="ECO:0000266"/>
    <property type="project" value="RGD"/>
</dbReference>
<dbReference type="GO" id="GO:0030018">
    <property type="term" value="C:Z disc"/>
    <property type="evidence" value="ECO:0000266"/>
    <property type="project" value="RGD"/>
</dbReference>
<dbReference type="GO" id="GO:0005509">
    <property type="term" value="F:calcium ion binding"/>
    <property type="evidence" value="ECO:0007669"/>
    <property type="project" value="InterPro"/>
</dbReference>
<dbReference type="GO" id="GO:0032036">
    <property type="term" value="F:myosin heavy chain binding"/>
    <property type="evidence" value="ECO:0000266"/>
    <property type="project" value="RGD"/>
</dbReference>
<dbReference type="GO" id="GO:0005200">
    <property type="term" value="F:structural constituent of cytoskeleton"/>
    <property type="evidence" value="ECO:0000266"/>
    <property type="project" value="RGD"/>
</dbReference>
<dbReference type="GO" id="GO:0030239">
    <property type="term" value="P:myofibril assembly"/>
    <property type="evidence" value="ECO:0000318"/>
    <property type="project" value="GO_Central"/>
</dbReference>
<dbReference type="GO" id="GO:0043149">
    <property type="term" value="P:stress fiber assembly"/>
    <property type="evidence" value="ECO:0000266"/>
    <property type="project" value="RGD"/>
</dbReference>
<dbReference type="CDD" id="cd00051">
    <property type="entry name" value="EFh"/>
    <property type="match status" value="1"/>
</dbReference>
<dbReference type="FunFam" id="1.10.238.10:FF:000010">
    <property type="entry name" value="Myosin regulatory light chain 2, atrial isoform"/>
    <property type="match status" value="1"/>
</dbReference>
<dbReference type="FunFam" id="1.10.238.10:FF:000007">
    <property type="entry name" value="Putative myosin regulatory light chain sqh"/>
    <property type="match status" value="1"/>
</dbReference>
<dbReference type="Gene3D" id="1.10.238.10">
    <property type="entry name" value="EF-hand"/>
    <property type="match status" value="2"/>
</dbReference>
<dbReference type="InterPro" id="IPR011992">
    <property type="entry name" value="EF-hand-dom_pair"/>
</dbReference>
<dbReference type="InterPro" id="IPR018247">
    <property type="entry name" value="EF_Hand_1_Ca_BS"/>
</dbReference>
<dbReference type="InterPro" id="IPR002048">
    <property type="entry name" value="EF_hand_dom"/>
</dbReference>
<dbReference type="InterPro" id="IPR050403">
    <property type="entry name" value="Myosin_RLC"/>
</dbReference>
<dbReference type="PANTHER" id="PTHR23049">
    <property type="entry name" value="MYOSIN REGULATORY LIGHT CHAIN 2"/>
    <property type="match status" value="1"/>
</dbReference>
<dbReference type="Pfam" id="PF13499">
    <property type="entry name" value="EF-hand_7"/>
    <property type="match status" value="1"/>
</dbReference>
<dbReference type="SMART" id="SM00054">
    <property type="entry name" value="EFh"/>
    <property type="match status" value="2"/>
</dbReference>
<dbReference type="SUPFAM" id="SSF47473">
    <property type="entry name" value="EF-hand"/>
    <property type="match status" value="1"/>
</dbReference>
<dbReference type="PROSITE" id="PS00018">
    <property type="entry name" value="EF_HAND_1"/>
    <property type="match status" value="1"/>
</dbReference>
<dbReference type="PROSITE" id="PS50222">
    <property type="entry name" value="EF_HAND_2"/>
    <property type="match status" value="2"/>
</dbReference>
<proteinExistence type="evidence at protein level"/>
<name>MYL9_RAT</name>
<gene>
    <name type="primary">Myl9</name>
    <name type="synonym">Myrl2</name>
</gene>
<reference key="1">
    <citation type="journal article" date="1995" name="Biochem. Biophys. Res. Commun.">
        <title>Genes up-regulated in hypertrophied ventricle.</title>
        <authorList>
            <person name="Iwai N."/>
            <person name="Shimoike H."/>
            <person name="Kinoshita M."/>
        </authorList>
    </citation>
    <scope>NUCLEOTIDE SEQUENCE [MRNA]</scope>
    <scope>TISSUE SPECIFICITY</scope>
    <source>
        <strain>Sprague-Dawley</strain>
        <tissue>Heart ventricle</tissue>
    </source>
</reference>
<reference key="2">
    <citation type="journal article" date="1996" name="J. Biol. Chem.">
        <title>Phosphorylation and activation of myosin by Rho-associated kinase (Rho-kinase).</title>
        <authorList>
            <person name="Amano M."/>
            <person name="Ito M."/>
            <person name="Kimura K."/>
            <person name="Fukata Y."/>
            <person name="Chihara K."/>
            <person name="Nakano T."/>
            <person name="Matsuura Y."/>
            <person name="Kaibuchi K."/>
        </authorList>
    </citation>
    <scope>PHOSPHORYLATION AT SER-20</scope>
</reference>
<feature type="initiator methionine" description="Removed" evidence="3">
    <location>
        <position position="1"/>
    </location>
</feature>
<feature type="chain" id="PRO_0000198738" description="Myosin regulatory light polypeptide 9">
    <location>
        <begin position="2"/>
        <end position="171"/>
    </location>
</feature>
<feature type="domain" description="EF-hand 1" evidence="5">
    <location>
        <begin position="29"/>
        <end position="64"/>
    </location>
</feature>
<feature type="domain" description="EF-hand 2" evidence="5">
    <location>
        <begin position="98"/>
        <end position="133"/>
    </location>
</feature>
<feature type="region of interest" description="Disordered" evidence="6">
    <location>
        <begin position="1"/>
        <end position="21"/>
    </location>
</feature>
<feature type="compositionally biased region" description="Basic residues" evidence="6">
    <location>
        <begin position="1"/>
        <end position="15"/>
    </location>
</feature>
<feature type="binding site" evidence="5">
    <location>
        <position position="42"/>
    </location>
    <ligand>
        <name>Ca(2+)</name>
        <dbReference type="ChEBI" id="CHEBI:29108"/>
    </ligand>
</feature>
<feature type="binding site" evidence="5">
    <location>
        <position position="44"/>
    </location>
    <ligand>
        <name>Ca(2+)</name>
        <dbReference type="ChEBI" id="CHEBI:29108"/>
    </ligand>
</feature>
<feature type="binding site" evidence="5">
    <location>
        <position position="46"/>
    </location>
    <ligand>
        <name>Ca(2+)</name>
        <dbReference type="ChEBI" id="CHEBI:29108"/>
    </ligand>
</feature>
<feature type="binding site" evidence="5">
    <location>
        <position position="53"/>
    </location>
    <ligand>
        <name>Ca(2+)</name>
        <dbReference type="ChEBI" id="CHEBI:29108"/>
    </ligand>
</feature>
<feature type="modified residue" description="N-acetylserine" evidence="3">
    <location>
        <position position="2"/>
    </location>
</feature>
<feature type="modified residue" description="Phosphothreonine; by MLCK, CIT and ROCK2" evidence="2">
    <location>
        <position position="19"/>
    </location>
</feature>
<feature type="modified residue" description="Phosphoserine; by CDC42BP, CIT, MLCK, PAK1, ROCK1, ROCK2, DAPK1, DAPK2 and ZIPK/DAPK3" evidence="8">
    <location>
        <position position="20"/>
    </location>
</feature>
<evidence type="ECO:0000250" key="1">
    <source>
        <dbReference type="UniProtKB" id="P02612"/>
    </source>
</evidence>
<evidence type="ECO:0000250" key="2">
    <source>
        <dbReference type="UniProtKB" id="P24844"/>
    </source>
</evidence>
<evidence type="ECO:0000250" key="3">
    <source>
        <dbReference type="UniProtKB" id="P29269"/>
    </source>
</evidence>
<evidence type="ECO:0000250" key="4">
    <source>
        <dbReference type="UniProtKB" id="Q9CQ19"/>
    </source>
</evidence>
<evidence type="ECO:0000255" key="5">
    <source>
        <dbReference type="PROSITE-ProRule" id="PRU00448"/>
    </source>
</evidence>
<evidence type="ECO:0000256" key="6">
    <source>
        <dbReference type="SAM" id="MobiDB-lite"/>
    </source>
</evidence>
<evidence type="ECO:0000269" key="7">
    <source>
    </source>
</evidence>
<evidence type="ECO:0000269" key="8">
    <source>
    </source>
</evidence>
<protein>
    <recommendedName>
        <fullName>Myosin regulatory light polypeptide 9</fullName>
    </recommendedName>
    <alternativeName>
        <fullName>Myosin regulatory light chain 2, smooth muscle isoform</fullName>
    </alternativeName>
    <alternativeName>
        <fullName>Myosin regulatory light chain 9</fullName>
    </alternativeName>
</protein>
<comment type="function">
    <text evidence="2 4">Myosin regulatory subunit that plays an important role in regulation of both smooth muscle and nonmuscle cell contractile activity via its phosphorylation. Implicated in cytokinesis, receptor capping, and cell locomotion (By similarity). In myoblasts, may regulate PIEZO1-dependent cortical actomyosin assembly involved in myotube formation (By similarity).</text>
</comment>
<comment type="subunit">
    <text evidence="2 4">Myosin is a hexamer of 2 heavy chains and 4 light chains: interacts with myosin heavy chain MYO19 (By similarity). Interacts with LUZP1; the interaction results in inhibition of phosphorylation of MYL9 by DAPK3 (By similarity).</text>
</comment>
<comment type="subcellular location">
    <subcellularLocation>
        <location evidence="4">Cytoplasm</location>
        <location evidence="4">Cytoskeleton</location>
    </subcellularLocation>
    <subcellularLocation>
        <location evidence="4">Cytoplasm</location>
        <location evidence="4">Cell cortex</location>
    </subcellularLocation>
    <text evidence="4">Colocalizes with F-actin, MYH9 and PIEZO1 at the actomyosin cortex in myoblasts.</text>
</comment>
<comment type="tissue specificity">
    <text evidence="7">Smooth muscle tissues and in some, but not all, nonmuscle cells.</text>
</comment>
<comment type="PTM">
    <text evidence="1 2">Phosphorylation increases the actin-activated myosin ATPase activity and thereby regulates the contractile activity. It is required to generate the driving force in the migration of the cells but not necessary for localization of myosin-2 at the leading edge. Phosphorylation is required for myotube formation. Phosphorylated by DAPK3; DAPK3-mediated phosphorylation is inhibited by LUZP1.</text>
</comment>
<comment type="miscellaneous">
    <text>This chain binds calcium.</text>
</comment>
<keyword id="KW-0007">Acetylation</keyword>
<keyword id="KW-0106">Calcium</keyword>
<keyword id="KW-0963">Cytoplasm</keyword>
<keyword id="KW-0206">Cytoskeleton</keyword>
<keyword id="KW-0479">Metal-binding</keyword>
<keyword id="KW-0505">Motor protein</keyword>
<keyword id="KW-0514">Muscle protein</keyword>
<keyword id="KW-0518">Myosin</keyword>
<keyword id="KW-0597">Phosphoprotein</keyword>
<keyword id="KW-1185">Reference proteome</keyword>
<keyword id="KW-0677">Repeat</keyword>
<accession>Q64122</accession>
<organism>
    <name type="scientific">Rattus norvegicus</name>
    <name type="common">Rat</name>
    <dbReference type="NCBI Taxonomy" id="10116"/>
    <lineage>
        <taxon>Eukaryota</taxon>
        <taxon>Metazoa</taxon>
        <taxon>Chordata</taxon>
        <taxon>Craniata</taxon>
        <taxon>Vertebrata</taxon>
        <taxon>Euteleostomi</taxon>
        <taxon>Mammalia</taxon>
        <taxon>Eutheria</taxon>
        <taxon>Euarchontoglires</taxon>
        <taxon>Glires</taxon>
        <taxon>Rodentia</taxon>
        <taxon>Myomorpha</taxon>
        <taxon>Muroidea</taxon>
        <taxon>Muridae</taxon>
        <taxon>Murinae</taxon>
        <taxon>Rattus</taxon>
    </lineage>
</organism>
<sequence>MSSKRAKAKTTKKRPQSATSNVFAMFDQSQIQEFKEAFNMIDQNRDGFIDKEDLHDMLASLGKNPTDEXLEGMMNEAPGPINFTMFLTMFGEKLNGTDPEDVIRNAFACFDEEASGFIHEDHLRELLTTMGDRFTDEEVDEMYRERIDKKGNFNYVEFTRILKHGAKDKDD</sequence>